<organism>
    <name type="scientific">Mycobacterium tuberculosis (strain CDC 1551 / Oshkosh)</name>
    <dbReference type="NCBI Taxonomy" id="83331"/>
    <lineage>
        <taxon>Bacteria</taxon>
        <taxon>Bacillati</taxon>
        <taxon>Actinomycetota</taxon>
        <taxon>Actinomycetes</taxon>
        <taxon>Mycobacteriales</taxon>
        <taxon>Mycobacteriaceae</taxon>
        <taxon>Mycobacterium</taxon>
        <taxon>Mycobacterium tuberculosis complex</taxon>
    </lineage>
</organism>
<keyword id="KW-0119">Carbohydrate metabolism</keyword>
<keyword id="KW-0299">Galactose metabolism</keyword>
<keyword id="KW-0413">Isomerase</keyword>
<keyword id="KW-0520">NAD</keyword>
<keyword id="KW-1185">Reference proteome</keyword>
<comment type="function">
    <text evidence="1">Involved in the metabolism of galactose. Catalyzes the conversion of UDP-galactose (UDP-Gal) to UDP-glucose (UDP-Glc) through a mechanism involving the transient reduction of NAD (By similarity).</text>
</comment>
<comment type="catalytic activity">
    <reaction>
        <text>UDP-alpha-D-glucose = UDP-alpha-D-galactose</text>
        <dbReference type="Rhea" id="RHEA:22168"/>
        <dbReference type="ChEBI" id="CHEBI:58885"/>
        <dbReference type="ChEBI" id="CHEBI:66914"/>
        <dbReference type="EC" id="5.1.3.2"/>
    </reaction>
</comment>
<comment type="cofactor">
    <cofactor evidence="1">
        <name>NAD(+)</name>
        <dbReference type="ChEBI" id="CHEBI:57540"/>
    </cofactor>
</comment>
<comment type="pathway">
    <text>Carbohydrate metabolism; galactose metabolism.</text>
</comment>
<comment type="subunit">
    <text evidence="1">Homodimer.</text>
</comment>
<comment type="similarity">
    <text evidence="3">Belongs to the NAD(P)-dependent epimerase/dehydratase family.</text>
</comment>
<comment type="sequence caution" evidence="3">
    <conflict type="erroneous initiation">
        <sequence resource="EMBL-CDS" id="AAK48097"/>
    </conflict>
    <text>Extended N-terminus.</text>
</comment>
<sequence>MRALVTGAAGFIGSTLVDRLLADGHSVVGLDNFATGRATNLEHLADNSAHVFVEADIVTADLHAILEQHRPEVVFHLAAQIDVRRSVADPQFDAAVNVIGTVRLAEAARQTGVRKIVHTSSGGSIYGTPPEYPTPETAPTDPASPYAAGKVAGEIYLNTFRHLYGLDCSHIAPANVYGPRQDPHGEAGVVAIFAQALLSGKPTRVFGDGTNTRDYVFVDDVVDAFVRVSADVGGGLRFNIGTGKETSDRQLHSAVAAAVGGPDDPEFHPPRLGDLKRSCLDIGLAERVLGWRPQIELADGVRRTVEYFRHKHTD</sequence>
<accession>P9WN66</accession>
<accession>F2GF05</accession>
<accession>L0TES1</accession>
<accession>Q6MWV3</accession>
<accession>Q7D561</accession>
<dbReference type="EC" id="5.1.3.2"/>
<dbReference type="EMBL" id="AE000516">
    <property type="protein sequence ID" value="AAK48097.1"/>
    <property type="status" value="ALT_INIT"/>
    <property type="molecule type" value="Genomic_DNA"/>
</dbReference>
<dbReference type="PIR" id="C70562">
    <property type="entry name" value="C70562"/>
</dbReference>
<dbReference type="RefSeq" id="WP_003419610.1">
    <property type="nucleotide sequence ID" value="NZ_KK341227.1"/>
</dbReference>
<dbReference type="SMR" id="P9WN66"/>
<dbReference type="KEGG" id="mtc:MT3736"/>
<dbReference type="PATRIC" id="fig|83331.31.peg.4020"/>
<dbReference type="HOGENOM" id="CLU_007383_1_7_11"/>
<dbReference type="UniPathway" id="UPA00214"/>
<dbReference type="Proteomes" id="UP000001020">
    <property type="component" value="Chromosome"/>
</dbReference>
<dbReference type="GO" id="GO:0003978">
    <property type="term" value="F:UDP-glucose 4-epimerase activity"/>
    <property type="evidence" value="ECO:0007669"/>
    <property type="project" value="UniProtKB-EC"/>
</dbReference>
<dbReference type="GO" id="GO:0006012">
    <property type="term" value="P:galactose metabolic process"/>
    <property type="evidence" value="ECO:0007669"/>
    <property type="project" value="UniProtKB-UniPathway"/>
</dbReference>
<dbReference type="Gene3D" id="3.40.50.720">
    <property type="entry name" value="NAD(P)-binding Rossmann-like Domain"/>
    <property type="match status" value="1"/>
</dbReference>
<dbReference type="Gene3D" id="3.90.25.10">
    <property type="entry name" value="UDP-galactose 4-epimerase, domain 1"/>
    <property type="match status" value="1"/>
</dbReference>
<dbReference type="InterPro" id="IPR001509">
    <property type="entry name" value="Epimerase_deHydtase"/>
</dbReference>
<dbReference type="InterPro" id="IPR036291">
    <property type="entry name" value="NAD(P)-bd_dom_sf"/>
</dbReference>
<dbReference type="PANTHER" id="PTHR43000">
    <property type="entry name" value="DTDP-D-GLUCOSE 4,6-DEHYDRATASE-RELATED"/>
    <property type="match status" value="1"/>
</dbReference>
<dbReference type="Pfam" id="PF01370">
    <property type="entry name" value="Epimerase"/>
    <property type="match status" value="1"/>
</dbReference>
<dbReference type="SUPFAM" id="SSF51735">
    <property type="entry name" value="NAD(P)-binding Rossmann-fold domains"/>
    <property type="match status" value="1"/>
</dbReference>
<dbReference type="PROSITE" id="PS00061">
    <property type="entry name" value="ADH_SHORT"/>
    <property type="match status" value="1"/>
</dbReference>
<protein>
    <recommendedName>
        <fullName>UDP-glucose 4-epimerase</fullName>
        <ecNumber>5.1.3.2</ecNumber>
    </recommendedName>
    <alternativeName>
        <fullName>UDP-galactose 4-epimerase</fullName>
    </alternativeName>
    <alternativeName>
        <fullName>Uridine diphosphate galactose 4-epimerase</fullName>
    </alternativeName>
</protein>
<evidence type="ECO:0000250" key="1"/>
<evidence type="ECO:0000255" key="2">
    <source>
        <dbReference type="PROSITE-ProRule" id="PRU10001"/>
    </source>
</evidence>
<evidence type="ECO:0000305" key="3"/>
<feature type="chain" id="PRO_0000427180" description="UDP-glucose 4-epimerase">
    <location>
        <begin position="1"/>
        <end position="314"/>
    </location>
</feature>
<feature type="active site" description="Proton acceptor" evidence="2">
    <location>
        <position position="146"/>
    </location>
</feature>
<feature type="binding site" evidence="1">
    <location>
        <begin position="11"/>
        <end position="12"/>
    </location>
    <ligand>
        <name>NAD(+)</name>
        <dbReference type="ChEBI" id="CHEBI:57540"/>
    </ligand>
</feature>
<feature type="binding site" evidence="1">
    <location>
        <begin position="31"/>
        <end position="36"/>
    </location>
    <ligand>
        <name>NAD(+)</name>
        <dbReference type="ChEBI" id="CHEBI:57540"/>
    </ligand>
</feature>
<feature type="binding site" evidence="1">
    <location>
        <begin position="56"/>
        <end position="57"/>
    </location>
    <ligand>
        <name>NAD(+)</name>
        <dbReference type="ChEBI" id="CHEBI:57540"/>
    </ligand>
</feature>
<feature type="binding site" evidence="1">
    <location>
        <begin position="77"/>
        <end position="81"/>
    </location>
    <ligand>
        <name>NAD(+)</name>
        <dbReference type="ChEBI" id="CHEBI:57540"/>
    </ligand>
</feature>
<feature type="binding site" evidence="1">
    <location>
        <position position="121"/>
    </location>
    <ligand>
        <name>substrate</name>
    </ligand>
</feature>
<feature type="binding site" evidence="1">
    <location>
        <position position="146"/>
    </location>
    <ligand>
        <name>NAD(+)</name>
        <dbReference type="ChEBI" id="CHEBI:57540"/>
    </ligand>
</feature>
<feature type="binding site" evidence="1">
    <location>
        <position position="146"/>
    </location>
    <ligand>
        <name>substrate</name>
    </ligand>
</feature>
<feature type="binding site" evidence="1">
    <location>
        <position position="150"/>
    </location>
    <ligand>
        <name>NAD(+)</name>
        <dbReference type="ChEBI" id="CHEBI:57540"/>
    </ligand>
</feature>
<feature type="binding site" evidence="1">
    <location>
        <position position="175"/>
    </location>
    <ligand>
        <name>substrate</name>
    </ligand>
</feature>
<feature type="binding site" evidence="1">
    <location>
        <begin position="189"/>
        <end position="190"/>
    </location>
    <ligand>
        <name>substrate</name>
    </ligand>
</feature>
<feature type="binding site" evidence="1">
    <location>
        <begin position="204"/>
        <end position="206"/>
    </location>
    <ligand>
        <name>substrate</name>
    </ligand>
</feature>
<feature type="binding site" evidence="1">
    <location>
        <position position="213"/>
    </location>
    <ligand>
        <name>substrate</name>
    </ligand>
</feature>
<feature type="binding site" evidence="1">
    <location>
        <begin position="271"/>
        <end position="274"/>
    </location>
    <ligand>
        <name>substrate</name>
    </ligand>
</feature>
<gene>
    <name type="primary">galE1</name>
    <name type="ordered locus">MT3736</name>
</gene>
<reference key="1">
    <citation type="journal article" date="2002" name="J. Bacteriol.">
        <title>Whole-genome comparison of Mycobacterium tuberculosis clinical and laboratory strains.</title>
        <authorList>
            <person name="Fleischmann R.D."/>
            <person name="Alland D."/>
            <person name="Eisen J.A."/>
            <person name="Carpenter L."/>
            <person name="White O."/>
            <person name="Peterson J.D."/>
            <person name="DeBoy R.T."/>
            <person name="Dodson R.J."/>
            <person name="Gwinn M.L."/>
            <person name="Haft D.H."/>
            <person name="Hickey E.K."/>
            <person name="Kolonay J.F."/>
            <person name="Nelson W.C."/>
            <person name="Umayam L.A."/>
            <person name="Ermolaeva M.D."/>
            <person name="Salzberg S.L."/>
            <person name="Delcher A."/>
            <person name="Utterback T.R."/>
            <person name="Weidman J.F."/>
            <person name="Khouri H.M."/>
            <person name="Gill J."/>
            <person name="Mikula A."/>
            <person name="Bishai W."/>
            <person name="Jacobs W.R. Jr."/>
            <person name="Venter J.C."/>
            <person name="Fraser C.M."/>
        </authorList>
    </citation>
    <scope>NUCLEOTIDE SEQUENCE [LARGE SCALE GENOMIC DNA]</scope>
    <source>
        <strain>CDC 1551 / Oshkosh</strain>
    </source>
</reference>
<name>GALE_MYCTO</name>
<proteinExistence type="inferred from homology"/>